<name>UBIA_HAHCH</name>
<sequence>MKSQGRPLPSVAEQFKARLPVYIGLTRLNRPIGTYLLLWPTLWALWLASEGAPSLKNLFIFVFGVLLMRSAGCVINDYADRRIDMHVERTKGRPFAQNQVTEKEALTLFGILVGVSFILVLFTNALTIYLSAGALALASTYPFMKRHTYLPQVVLGAAFAWGIPMAFAAELDAVPQQAWLLYTATVVWTVAYDTMYAMADREDDLKIGVKSTAILFGEADRAAVAGLQVLTLGVLFMVGAQHELGVYYQVSLIIVAVLFVYQQHLIRDRSSQHCFKAFLNNHWVGAAVFLGLVLEFLFRP</sequence>
<keyword id="KW-0997">Cell inner membrane</keyword>
<keyword id="KW-1003">Cell membrane</keyword>
<keyword id="KW-0460">Magnesium</keyword>
<keyword id="KW-0472">Membrane</keyword>
<keyword id="KW-1185">Reference proteome</keyword>
<keyword id="KW-0808">Transferase</keyword>
<keyword id="KW-0812">Transmembrane</keyword>
<keyword id="KW-1133">Transmembrane helix</keyword>
<keyword id="KW-0831">Ubiquinone biosynthesis</keyword>
<proteinExistence type="inferred from homology"/>
<comment type="function">
    <text evidence="1">Catalyzes the prenylation of para-hydroxybenzoate (PHB) with an all-trans polyprenyl group. Mediates the second step in the final reaction sequence of ubiquinone-8 (UQ-8) biosynthesis, which is the condensation of the polyisoprenoid side chain with PHB, generating the first membrane-bound Q intermediate 3-octaprenyl-4-hydroxybenzoate.</text>
</comment>
<comment type="catalytic activity">
    <reaction evidence="1">
        <text>all-trans-octaprenyl diphosphate + 4-hydroxybenzoate = 4-hydroxy-3-(all-trans-octaprenyl)benzoate + diphosphate</text>
        <dbReference type="Rhea" id="RHEA:27782"/>
        <dbReference type="ChEBI" id="CHEBI:1617"/>
        <dbReference type="ChEBI" id="CHEBI:17879"/>
        <dbReference type="ChEBI" id="CHEBI:33019"/>
        <dbReference type="ChEBI" id="CHEBI:57711"/>
        <dbReference type="EC" id="2.5.1.39"/>
    </reaction>
</comment>
<comment type="cofactor">
    <cofactor evidence="1">
        <name>Mg(2+)</name>
        <dbReference type="ChEBI" id="CHEBI:18420"/>
    </cofactor>
</comment>
<comment type="pathway">
    <text evidence="1">Cofactor biosynthesis; ubiquinone biosynthesis.</text>
</comment>
<comment type="subcellular location">
    <subcellularLocation>
        <location evidence="1">Cell inner membrane</location>
        <topology evidence="1">Multi-pass membrane protein</topology>
    </subcellularLocation>
</comment>
<comment type="similarity">
    <text evidence="1">Belongs to the UbiA prenyltransferase family.</text>
</comment>
<protein>
    <recommendedName>
        <fullName evidence="1">4-hydroxybenzoate octaprenyltransferase</fullName>
        <ecNumber evidence="1">2.5.1.39</ecNumber>
    </recommendedName>
    <alternativeName>
        <fullName evidence="1">4-HB polyprenyltransferase</fullName>
    </alternativeName>
</protein>
<gene>
    <name evidence="1" type="primary">ubiA</name>
    <name type="ordered locus">HCH_00773</name>
</gene>
<accession>Q2SNV5</accession>
<reference key="1">
    <citation type="journal article" date="2005" name="Nucleic Acids Res.">
        <title>Genomic blueprint of Hahella chejuensis, a marine microbe producing an algicidal agent.</title>
        <authorList>
            <person name="Jeong H."/>
            <person name="Yim J.H."/>
            <person name="Lee C."/>
            <person name="Choi S.-H."/>
            <person name="Park Y.K."/>
            <person name="Yoon S.H."/>
            <person name="Hur C.-G."/>
            <person name="Kang H.-Y."/>
            <person name="Kim D."/>
            <person name="Lee H.H."/>
            <person name="Park K.H."/>
            <person name="Park S.-H."/>
            <person name="Park H.-S."/>
            <person name="Lee H.K."/>
            <person name="Oh T.K."/>
            <person name="Kim J.F."/>
        </authorList>
    </citation>
    <scope>NUCLEOTIDE SEQUENCE [LARGE SCALE GENOMIC DNA]</scope>
    <source>
        <strain>KCTC 2396</strain>
    </source>
</reference>
<organism>
    <name type="scientific">Hahella chejuensis (strain KCTC 2396)</name>
    <dbReference type="NCBI Taxonomy" id="349521"/>
    <lineage>
        <taxon>Bacteria</taxon>
        <taxon>Pseudomonadati</taxon>
        <taxon>Pseudomonadota</taxon>
        <taxon>Gammaproteobacteria</taxon>
        <taxon>Oceanospirillales</taxon>
        <taxon>Hahellaceae</taxon>
        <taxon>Hahella</taxon>
    </lineage>
</organism>
<evidence type="ECO:0000255" key="1">
    <source>
        <dbReference type="HAMAP-Rule" id="MF_01635"/>
    </source>
</evidence>
<feature type="chain" id="PRO_0000262801" description="4-hydroxybenzoate octaprenyltransferase">
    <location>
        <begin position="1"/>
        <end position="300"/>
    </location>
</feature>
<feature type="transmembrane region" description="Helical" evidence="1">
    <location>
        <begin position="32"/>
        <end position="52"/>
    </location>
</feature>
<feature type="transmembrane region" description="Helical" evidence="1">
    <location>
        <begin position="55"/>
        <end position="75"/>
    </location>
</feature>
<feature type="transmembrane region" description="Helical" evidence="1">
    <location>
        <begin position="108"/>
        <end position="128"/>
    </location>
</feature>
<feature type="transmembrane region" description="Helical" evidence="1">
    <location>
        <begin position="149"/>
        <end position="169"/>
    </location>
</feature>
<feature type="transmembrane region" description="Helical" evidence="1">
    <location>
        <begin position="178"/>
        <end position="198"/>
    </location>
</feature>
<feature type="transmembrane region" description="Helical" evidence="1">
    <location>
        <begin position="222"/>
        <end position="242"/>
    </location>
</feature>
<feature type="transmembrane region" description="Helical" evidence="1">
    <location>
        <begin position="246"/>
        <end position="266"/>
    </location>
</feature>
<feature type="transmembrane region" description="Helical" evidence="1">
    <location>
        <begin position="278"/>
        <end position="298"/>
    </location>
</feature>
<dbReference type="EC" id="2.5.1.39" evidence="1"/>
<dbReference type="EMBL" id="CP000155">
    <property type="protein sequence ID" value="ABC27669.1"/>
    <property type="molecule type" value="Genomic_DNA"/>
</dbReference>
<dbReference type="RefSeq" id="WP_011394746.1">
    <property type="nucleotide sequence ID" value="NC_007645.1"/>
</dbReference>
<dbReference type="SMR" id="Q2SNV5"/>
<dbReference type="STRING" id="349521.HCH_00773"/>
<dbReference type="KEGG" id="hch:HCH_00773"/>
<dbReference type="eggNOG" id="COG0382">
    <property type="taxonomic scope" value="Bacteria"/>
</dbReference>
<dbReference type="HOGENOM" id="CLU_034879_1_0_6"/>
<dbReference type="OrthoDB" id="9782418at2"/>
<dbReference type="UniPathway" id="UPA00232"/>
<dbReference type="Proteomes" id="UP000000238">
    <property type="component" value="Chromosome"/>
</dbReference>
<dbReference type="GO" id="GO:0005886">
    <property type="term" value="C:plasma membrane"/>
    <property type="evidence" value="ECO:0007669"/>
    <property type="project" value="UniProtKB-SubCell"/>
</dbReference>
<dbReference type="GO" id="GO:0008412">
    <property type="term" value="F:4-hydroxybenzoate polyprenyltransferase activity"/>
    <property type="evidence" value="ECO:0007669"/>
    <property type="project" value="UniProtKB-UniRule"/>
</dbReference>
<dbReference type="GO" id="GO:0006744">
    <property type="term" value="P:ubiquinone biosynthetic process"/>
    <property type="evidence" value="ECO:0007669"/>
    <property type="project" value="UniProtKB-UniRule"/>
</dbReference>
<dbReference type="CDD" id="cd13959">
    <property type="entry name" value="PT_UbiA_COQ2"/>
    <property type="match status" value="1"/>
</dbReference>
<dbReference type="FunFam" id="1.10.357.140:FF:000002">
    <property type="entry name" value="4-hydroxybenzoate octaprenyltransferase"/>
    <property type="match status" value="1"/>
</dbReference>
<dbReference type="FunFam" id="1.20.120.1780:FF:000001">
    <property type="entry name" value="4-hydroxybenzoate octaprenyltransferase"/>
    <property type="match status" value="1"/>
</dbReference>
<dbReference type="Gene3D" id="1.10.357.140">
    <property type="entry name" value="UbiA prenyltransferase"/>
    <property type="match status" value="1"/>
</dbReference>
<dbReference type="Gene3D" id="1.20.120.1780">
    <property type="entry name" value="UbiA prenyltransferase"/>
    <property type="match status" value="1"/>
</dbReference>
<dbReference type="HAMAP" id="MF_01635">
    <property type="entry name" value="UbiA"/>
    <property type="match status" value="1"/>
</dbReference>
<dbReference type="InterPro" id="IPR006370">
    <property type="entry name" value="HB_polyprenyltransferase-like"/>
</dbReference>
<dbReference type="InterPro" id="IPR039653">
    <property type="entry name" value="Prenyltransferase"/>
</dbReference>
<dbReference type="InterPro" id="IPR000537">
    <property type="entry name" value="UbiA_prenyltransferase"/>
</dbReference>
<dbReference type="InterPro" id="IPR030470">
    <property type="entry name" value="UbiA_prenylTrfase_CS"/>
</dbReference>
<dbReference type="InterPro" id="IPR044878">
    <property type="entry name" value="UbiA_sf"/>
</dbReference>
<dbReference type="NCBIfam" id="TIGR01474">
    <property type="entry name" value="ubiA_proteo"/>
    <property type="match status" value="1"/>
</dbReference>
<dbReference type="PANTHER" id="PTHR11048:SF28">
    <property type="entry name" value="4-HYDROXYBENZOATE POLYPRENYLTRANSFERASE, MITOCHONDRIAL"/>
    <property type="match status" value="1"/>
</dbReference>
<dbReference type="PANTHER" id="PTHR11048">
    <property type="entry name" value="PRENYLTRANSFERASES"/>
    <property type="match status" value="1"/>
</dbReference>
<dbReference type="Pfam" id="PF01040">
    <property type="entry name" value="UbiA"/>
    <property type="match status" value="1"/>
</dbReference>
<dbReference type="PROSITE" id="PS00943">
    <property type="entry name" value="UBIA"/>
    <property type="match status" value="1"/>
</dbReference>